<comment type="function">
    <text evidence="1">Constituent of COPII-coated endoplasmic reticulum-derived transport vesicles. Required for efficient transport of a subset of secretory proteins to the Golgi. Facilitates retrograde transport from the Golgi to the endoplasmic reticulum (By similarity).</text>
</comment>
<comment type="subcellular location">
    <subcellularLocation>
        <location evidence="1">Endoplasmic reticulum membrane</location>
        <topology evidence="1">Single-pass type I membrane protein</topology>
    </subcellularLocation>
    <subcellularLocation>
        <location evidence="1">Golgi apparatus membrane</location>
        <topology evidence="1">Single-pass type I membrane protein</topology>
    </subcellularLocation>
    <text evidence="1">Recycles between endoplasmic reticulum and Golgi.</text>
</comment>
<comment type="similarity">
    <text evidence="4">Belongs to the EMP24/GP25L family.</text>
</comment>
<organism>
    <name type="scientific">Eremothecium gossypii (strain ATCC 10895 / CBS 109.51 / FGSC 9923 / NRRL Y-1056)</name>
    <name type="common">Yeast</name>
    <name type="synonym">Ashbya gossypii</name>
    <dbReference type="NCBI Taxonomy" id="284811"/>
    <lineage>
        <taxon>Eukaryota</taxon>
        <taxon>Fungi</taxon>
        <taxon>Dikarya</taxon>
        <taxon>Ascomycota</taxon>
        <taxon>Saccharomycotina</taxon>
        <taxon>Saccharomycetes</taxon>
        <taxon>Saccharomycetales</taxon>
        <taxon>Saccharomycetaceae</taxon>
        <taxon>Eremothecium</taxon>
    </lineage>
</organism>
<proteinExistence type="inferred from homology"/>
<gene>
    <name type="primary">ERV25</name>
    <name type="ordered locus">ADR185W</name>
</gene>
<feature type="signal peptide" evidence="2">
    <location>
        <begin position="1"/>
        <end position="18"/>
    </location>
</feature>
<feature type="chain" id="PRO_0000237687" description="Endoplasmic reticulum vesicle protein 25">
    <location>
        <begin position="19"/>
        <end position="209"/>
    </location>
</feature>
<feature type="topological domain" description="Lumenal" evidence="2">
    <location>
        <begin position="19"/>
        <end position="178"/>
    </location>
</feature>
<feature type="transmembrane region" description="Helical" evidence="2">
    <location>
        <begin position="179"/>
        <end position="199"/>
    </location>
</feature>
<feature type="topological domain" description="Cytoplasmic" evidence="2">
    <location>
        <begin position="200"/>
        <end position="209"/>
    </location>
</feature>
<feature type="domain" description="GOLD" evidence="3">
    <location>
        <begin position="31"/>
        <end position="119"/>
    </location>
</feature>
<dbReference type="EMBL" id="AE016817">
    <property type="protein sequence ID" value="AAS52105.1"/>
    <property type="molecule type" value="Genomic_DNA"/>
</dbReference>
<dbReference type="RefSeq" id="NP_984281.1">
    <property type="nucleotide sequence ID" value="NM_209634.1"/>
</dbReference>
<dbReference type="SMR" id="Q759T8"/>
<dbReference type="FunCoup" id="Q759T8">
    <property type="interactions" value="1173"/>
</dbReference>
<dbReference type="STRING" id="284811.Q759T8"/>
<dbReference type="EnsemblFungi" id="AAS52105">
    <property type="protein sequence ID" value="AAS52105"/>
    <property type="gene ID" value="AGOS_ADR185W"/>
</dbReference>
<dbReference type="GeneID" id="4620443"/>
<dbReference type="KEGG" id="ago:AGOS_ADR185W"/>
<dbReference type="eggNOG" id="KOG1691">
    <property type="taxonomic scope" value="Eukaryota"/>
</dbReference>
<dbReference type="HOGENOM" id="CLU_066963_3_0_1"/>
<dbReference type="InParanoid" id="Q759T8"/>
<dbReference type="OMA" id="MAIRGIF"/>
<dbReference type="OrthoDB" id="759142at2759"/>
<dbReference type="Proteomes" id="UP000000591">
    <property type="component" value="Chromosome IV"/>
</dbReference>
<dbReference type="GO" id="GO:0030134">
    <property type="term" value="C:COPII-coated ER to Golgi transport vesicle"/>
    <property type="evidence" value="ECO:0000318"/>
    <property type="project" value="GO_Central"/>
</dbReference>
<dbReference type="GO" id="GO:0005783">
    <property type="term" value="C:endoplasmic reticulum"/>
    <property type="evidence" value="ECO:0000318"/>
    <property type="project" value="GO_Central"/>
</dbReference>
<dbReference type="GO" id="GO:0005789">
    <property type="term" value="C:endoplasmic reticulum membrane"/>
    <property type="evidence" value="ECO:0007669"/>
    <property type="project" value="UniProtKB-SubCell"/>
</dbReference>
<dbReference type="GO" id="GO:0005793">
    <property type="term" value="C:endoplasmic reticulum-Golgi intermediate compartment"/>
    <property type="evidence" value="ECO:0000318"/>
    <property type="project" value="GO_Central"/>
</dbReference>
<dbReference type="GO" id="GO:0005794">
    <property type="term" value="C:Golgi apparatus"/>
    <property type="evidence" value="ECO:0000318"/>
    <property type="project" value="GO_Central"/>
</dbReference>
<dbReference type="GO" id="GO:0000139">
    <property type="term" value="C:Golgi membrane"/>
    <property type="evidence" value="ECO:0007669"/>
    <property type="project" value="UniProtKB-SubCell"/>
</dbReference>
<dbReference type="GO" id="GO:0006888">
    <property type="term" value="P:endoplasmic reticulum to Golgi vesicle-mediated transport"/>
    <property type="evidence" value="ECO:0000318"/>
    <property type="project" value="GO_Central"/>
</dbReference>
<dbReference type="GO" id="GO:0007030">
    <property type="term" value="P:Golgi organization"/>
    <property type="evidence" value="ECO:0000318"/>
    <property type="project" value="GO_Central"/>
</dbReference>
<dbReference type="GO" id="GO:0006886">
    <property type="term" value="P:intracellular protein transport"/>
    <property type="evidence" value="ECO:0000318"/>
    <property type="project" value="GO_Central"/>
</dbReference>
<dbReference type="InterPro" id="IPR015720">
    <property type="entry name" value="Emp24-like"/>
</dbReference>
<dbReference type="InterPro" id="IPR009038">
    <property type="entry name" value="GOLD_dom"/>
</dbReference>
<dbReference type="PANTHER" id="PTHR22811">
    <property type="entry name" value="TRANSMEMBRANE EMP24 DOMAIN-CONTAINING PROTEIN"/>
    <property type="match status" value="1"/>
</dbReference>
<dbReference type="Pfam" id="PF01105">
    <property type="entry name" value="EMP24_GP25L"/>
    <property type="match status" value="1"/>
</dbReference>
<dbReference type="SMART" id="SM01190">
    <property type="entry name" value="EMP24_GP25L"/>
    <property type="match status" value="1"/>
</dbReference>
<dbReference type="PROSITE" id="PS50866">
    <property type="entry name" value="GOLD"/>
    <property type="match status" value="1"/>
</dbReference>
<sequence length="209" mass="24034">MKYTTFGIISLFLSVTWALRFELAASFEPKPFCIRDFVEAGNQVVITMESDGRVGDGQVLSFYVIDSMGNEHRRKKNFAEKLNVAFTAPSSAVFDVCFENKAEAAGRSLMRNVEVNIESGSAARDWDKIRSAEKLRPAEVQLRQVEEMSDEIVERLNYLKLREERLRDTNESTNRRVRNFSMAVIVVFAALCAWQLNYLKNYFRAKHII</sequence>
<name>TMEDA_EREGS</name>
<protein>
    <recommendedName>
        <fullName>Endoplasmic reticulum vesicle protein 25</fullName>
    </recommendedName>
</protein>
<evidence type="ECO:0000250" key="1"/>
<evidence type="ECO:0000255" key="2"/>
<evidence type="ECO:0000255" key="3">
    <source>
        <dbReference type="PROSITE-ProRule" id="PRU00096"/>
    </source>
</evidence>
<evidence type="ECO:0000305" key="4"/>
<accession>Q759T8</accession>
<keyword id="KW-0256">Endoplasmic reticulum</keyword>
<keyword id="KW-0931">ER-Golgi transport</keyword>
<keyword id="KW-0333">Golgi apparatus</keyword>
<keyword id="KW-0472">Membrane</keyword>
<keyword id="KW-0653">Protein transport</keyword>
<keyword id="KW-1185">Reference proteome</keyword>
<keyword id="KW-0732">Signal</keyword>
<keyword id="KW-0812">Transmembrane</keyword>
<keyword id="KW-1133">Transmembrane helix</keyword>
<keyword id="KW-0813">Transport</keyword>
<reference key="1">
    <citation type="journal article" date="2004" name="Science">
        <title>The Ashbya gossypii genome as a tool for mapping the ancient Saccharomyces cerevisiae genome.</title>
        <authorList>
            <person name="Dietrich F.S."/>
            <person name="Voegeli S."/>
            <person name="Brachat S."/>
            <person name="Lerch A."/>
            <person name="Gates K."/>
            <person name="Steiner S."/>
            <person name="Mohr C."/>
            <person name="Poehlmann R."/>
            <person name="Luedi P."/>
            <person name="Choi S."/>
            <person name="Wing R.A."/>
            <person name="Flavier A."/>
            <person name="Gaffney T.D."/>
            <person name="Philippsen P."/>
        </authorList>
    </citation>
    <scope>NUCLEOTIDE SEQUENCE [LARGE SCALE GENOMIC DNA]</scope>
    <source>
        <strain>ATCC 10895 / CBS 109.51 / FGSC 9923 / NRRL Y-1056</strain>
    </source>
</reference>
<reference key="2">
    <citation type="journal article" date="2013" name="G3 (Bethesda)">
        <title>Genomes of Ashbya fungi isolated from insects reveal four mating-type loci, numerous translocations, lack of transposons, and distinct gene duplications.</title>
        <authorList>
            <person name="Dietrich F.S."/>
            <person name="Voegeli S."/>
            <person name="Kuo S."/>
            <person name="Philippsen P."/>
        </authorList>
    </citation>
    <scope>GENOME REANNOTATION</scope>
    <source>
        <strain>ATCC 10895 / CBS 109.51 / FGSC 9923 / NRRL Y-1056</strain>
    </source>
</reference>